<accession>P37104</accession>
<proteinExistence type="inferred from homology"/>
<reference key="1">
    <citation type="journal article" date="1993" name="J. Bacteriol.">
        <title>Cloning and characterization of a Bacillus subtilis gene encoding a homolog of the 54-kilodalton subunit of mammalian signal recognition particle and Escherichia coli Ffh.</title>
        <authorList>
            <person name="Honda K."/>
            <person name="Nakamura K."/>
            <person name="Nishiguchi M."/>
            <person name="Yamane K."/>
        </authorList>
    </citation>
    <scope>NUCLEOTIDE SEQUENCE [GENOMIC DNA]</scope>
    <source>
        <strain>168</strain>
    </source>
</reference>
<reference key="2">
    <citation type="journal article" date="1997" name="Nature">
        <title>The complete genome sequence of the Gram-positive bacterium Bacillus subtilis.</title>
        <authorList>
            <person name="Kunst F."/>
            <person name="Ogasawara N."/>
            <person name="Moszer I."/>
            <person name="Albertini A.M."/>
            <person name="Alloni G."/>
            <person name="Azevedo V."/>
            <person name="Bertero M.G."/>
            <person name="Bessieres P."/>
            <person name="Bolotin A."/>
            <person name="Borchert S."/>
            <person name="Borriss R."/>
            <person name="Boursier L."/>
            <person name="Brans A."/>
            <person name="Braun M."/>
            <person name="Brignell S.C."/>
            <person name="Bron S."/>
            <person name="Brouillet S."/>
            <person name="Bruschi C.V."/>
            <person name="Caldwell B."/>
            <person name="Capuano V."/>
            <person name="Carter N.M."/>
            <person name="Choi S.-K."/>
            <person name="Codani J.-J."/>
            <person name="Connerton I.F."/>
            <person name="Cummings N.J."/>
            <person name="Daniel R.A."/>
            <person name="Denizot F."/>
            <person name="Devine K.M."/>
            <person name="Duesterhoeft A."/>
            <person name="Ehrlich S.D."/>
            <person name="Emmerson P.T."/>
            <person name="Entian K.-D."/>
            <person name="Errington J."/>
            <person name="Fabret C."/>
            <person name="Ferrari E."/>
            <person name="Foulger D."/>
            <person name="Fritz C."/>
            <person name="Fujita M."/>
            <person name="Fujita Y."/>
            <person name="Fuma S."/>
            <person name="Galizzi A."/>
            <person name="Galleron N."/>
            <person name="Ghim S.-Y."/>
            <person name="Glaser P."/>
            <person name="Goffeau A."/>
            <person name="Golightly E.J."/>
            <person name="Grandi G."/>
            <person name="Guiseppi G."/>
            <person name="Guy B.J."/>
            <person name="Haga K."/>
            <person name="Haiech J."/>
            <person name="Harwood C.R."/>
            <person name="Henaut A."/>
            <person name="Hilbert H."/>
            <person name="Holsappel S."/>
            <person name="Hosono S."/>
            <person name="Hullo M.-F."/>
            <person name="Itaya M."/>
            <person name="Jones L.-M."/>
            <person name="Joris B."/>
            <person name="Karamata D."/>
            <person name="Kasahara Y."/>
            <person name="Klaerr-Blanchard M."/>
            <person name="Klein C."/>
            <person name="Kobayashi Y."/>
            <person name="Koetter P."/>
            <person name="Koningstein G."/>
            <person name="Krogh S."/>
            <person name="Kumano M."/>
            <person name="Kurita K."/>
            <person name="Lapidus A."/>
            <person name="Lardinois S."/>
            <person name="Lauber J."/>
            <person name="Lazarevic V."/>
            <person name="Lee S.-M."/>
            <person name="Levine A."/>
            <person name="Liu H."/>
            <person name="Masuda S."/>
            <person name="Mauel C."/>
            <person name="Medigue C."/>
            <person name="Medina N."/>
            <person name="Mellado R.P."/>
            <person name="Mizuno M."/>
            <person name="Moestl D."/>
            <person name="Nakai S."/>
            <person name="Noback M."/>
            <person name="Noone D."/>
            <person name="O'Reilly M."/>
            <person name="Ogawa K."/>
            <person name="Ogiwara A."/>
            <person name="Oudega B."/>
            <person name="Park S.-H."/>
            <person name="Parro V."/>
            <person name="Pohl T.M."/>
            <person name="Portetelle D."/>
            <person name="Porwollik S."/>
            <person name="Prescott A.M."/>
            <person name="Presecan E."/>
            <person name="Pujic P."/>
            <person name="Purnelle B."/>
            <person name="Rapoport G."/>
            <person name="Rey M."/>
            <person name="Reynolds S."/>
            <person name="Rieger M."/>
            <person name="Rivolta C."/>
            <person name="Rocha E."/>
            <person name="Roche B."/>
            <person name="Rose M."/>
            <person name="Sadaie Y."/>
            <person name="Sato T."/>
            <person name="Scanlan E."/>
            <person name="Schleich S."/>
            <person name="Schroeter R."/>
            <person name="Scoffone F."/>
            <person name="Sekiguchi J."/>
            <person name="Sekowska A."/>
            <person name="Seror S.J."/>
            <person name="Serror P."/>
            <person name="Shin B.-S."/>
            <person name="Soldo B."/>
            <person name="Sorokin A."/>
            <person name="Tacconi E."/>
            <person name="Takagi T."/>
            <person name="Takahashi H."/>
            <person name="Takemaru K."/>
            <person name="Takeuchi M."/>
            <person name="Tamakoshi A."/>
            <person name="Tanaka T."/>
            <person name="Terpstra P."/>
            <person name="Tognoni A."/>
            <person name="Tosato V."/>
            <person name="Uchiyama S."/>
            <person name="Vandenbol M."/>
            <person name="Vannier F."/>
            <person name="Vassarotti A."/>
            <person name="Viari A."/>
            <person name="Wambutt R."/>
            <person name="Wedler E."/>
            <person name="Wedler H."/>
            <person name="Weitzenegger T."/>
            <person name="Winters P."/>
            <person name="Wipat A."/>
            <person name="Yamamoto H."/>
            <person name="Yamane K."/>
            <person name="Yasumoto K."/>
            <person name="Yata K."/>
            <person name="Yoshida K."/>
            <person name="Yoshikawa H.-F."/>
            <person name="Zumstein E."/>
            <person name="Yoshikawa H."/>
            <person name="Danchin A."/>
        </authorList>
    </citation>
    <scope>NUCLEOTIDE SEQUENCE [LARGE SCALE GENOMIC DNA]</scope>
    <source>
        <strain>168</strain>
    </source>
</reference>
<evidence type="ECO:0000305" key="1"/>
<gene>
    <name type="primary">ylxM</name>
    <name type="ordered locus">BSU15970</name>
</gene>
<comment type="function">
    <text>Might take part in the signal recognition particle (SRP) pathway. This is inferred from the conservation of its genetic proximity to ftsY/ffh. May be a regulatory protein.</text>
</comment>
<comment type="similarity">
    <text evidence="1">Belongs to the UPF0122 family.</text>
</comment>
<protein>
    <recommendedName>
        <fullName>UPF0122 protein YlxM</fullName>
    </recommendedName>
</protein>
<dbReference type="EMBL" id="D14356">
    <property type="protein sequence ID" value="BAA22221.1"/>
    <property type="molecule type" value="Genomic_DNA"/>
</dbReference>
<dbReference type="EMBL" id="AL009126">
    <property type="protein sequence ID" value="CAB13470.1"/>
    <property type="molecule type" value="Genomic_DNA"/>
</dbReference>
<dbReference type="PIR" id="A47154">
    <property type="entry name" value="A47154"/>
</dbReference>
<dbReference type="RefSeq" id="NP_389479.1">
    <property type="nucleotide sequence ID" value="NC_000964.3"/>
</dbReference>
<dbReference type="RefSeq" id="WP_003238590.1">
    <property type="nucleotide sequence ID" value="NZ_OZ025638.1"/>
</dbReference>
<dbReference type="SMR" id="P37104"/>
<dbReference type="FunCoup" id="P37104">
    <property type="interactions" value="51"/>
</dbReference>
<dbReference type="IntAct" id="P37104">
    <property type="interactions" value="2"/>
</dbReference>
<dbReference type="STRING" id="224308.BSU15970"/>
<dbReference type="PaxDb" id="224308-BSU15970"/>
<dbReference type="EnsemblBacteria" id="CAB13470">
    <property type="protein sequence ID" value="CAB13470"/>
    <property type="gene ID" value="BSU_15970"/>
</dbReference>
<dbReference type="GeneID" id="937995"/>
<dbReference type="KEGG" id="bsu:BSU15970"/>
<dbReference type="PATRIC" id="fig|224308.179.peg.1737"/>
<dbReference type="eggNOG" id="COG2739">
    <property type="taxonomic scope" value="Bacteria"/>
</dbReference>
<dbReference type="InParanoid" id="P37104"/>
<dbReference type="OrthoDB" id="6392at2"/>
<dbReference type="PhylomeDB" id="P37104"/>
<dbReference type="BioCyc" id="BSUB:BSU15970-MONOMER"/>
<dbReference type="PRO" id="PR:P37104"/>
<dbReference type="Proteomes" id="UP000001570">
    <property type="component" value="Chromosome"/>
</dbReference>
<dbReference type="Gene3D" id="1.10.10.10">
    <property type="entry name" value="Winged helix-like DNA-binding domain superfamily/Winged helix DNA-binding domain"/>
    <property type="match status" value="1"/>
</dbReference>
<dbReference type="HAMAP" id="MF_00245">
    <property type="entry name" value="UPF0122"/>
    <property type="match status" value="1"/>
</dbReference>
<dbReference type="InterPro" id="IPR013324">
    <property type="entry name" value="RNA_pol_sigma_r3/r4-like"/>
</dbReference>
<dbReference type="InterPro" id="IPR007394">
    <property type="entry name" value="UPF0122"/>
</dbReference>
<dbReference type="InterPro" id="IPR054831">
    <property type="entry name" value="UPF0122_fam_protein"/>
</dbReference>
<dbReference type="InterPro" id="IPR036388">
    <property type="entry name" value="WH-like_DNA-bd_sf"/>
</dbReference>
<dbReference type="NCBIfam" id="NF001068">
    <property type="entry name" value="PRK00118.1-4"/>
    <property type="match status" value="1"/>
</dbReference>
<dbReference type="NCBIfam" id="NF001070">
    <property type="entry name" value="PRK00118.1-6"/>
    <property type="match status" value="1"/>
</dbReference>
<dbReference type="NCBIfam" id="NF045758">
    <property type="entry name" value="YlxM"/>
    <property type="match status" value="1"/>
</dbReference>
<dbReference type="PANTHER" id="PTHR40083">
    <property type="entry name" value="UPF0122 PROTEIN CBO2450/CLC_2298"/>
    <property type="match status" value="1"/>
</dbReference>
<dbReference type="PANTHER" id="PTHR40083:SF1">
    <property type="entry name" value="UPF0122 PROTEIN YLXM"/>
    <property type="match status" value="1"/>
</dbReference>
<dbReference type="Pfam" id="PF04297">
    <property type="entry name" value="UPF0122"/>
    <property type="match status" value="1"/>
</dbReference>
<dbReference type="SUPFAM" id="SSF88659">
    <property type="entry name" value="Sigma3 and sigma4 domains of RNA polymerase sigma factors"/>
    <property type="match status" value="1"/>
</dbReference>
<organism>
    <name type="scientific">Bacillus subtilis (strain 168)</name>
    <dbReference type="NCBI Taxonomy" id="224308"/>
    <lineage>
        <taxon>Bacteria</taxon>
        <taxon>Bacillati</taxon>
        <taxon>Bacillota</taxon>
        <taxon>Bacilli</taxon>
        <taxon>Bacillales</taxon>
        <taxon>Bacillaceae</taxon>
        <taxon>Bacillus</taxon>
    </lineage>
</organism>
<feature type="chain" id="PRO_0000211861" description="UPF0122 protein YlxM">
    <location>
        <begin position="1"/>
        <end position="110"/>
    </location>
</feature>
<sequence length="110" mass="13165">MSLEKTTRMNYLFDFYQSLLTSKQKSYMSLYYLDDFSLGEIAEEYEVSRQAVYDNIKRTEAMLEQYEEKLLLLKKFQERKEMFNKLKELASGSKEEEEITALIEALEKLD</sequence>
<keyword id="KW-1185">Reference proteome</keyword>
<name>YLXM_BACSU</name>